<organism>
    <name type="scientific">Halobacterium salinarum</name>
    <name type="common">Halobacterium halobium</name>
    <dbReference type="NCBI Taxonomy" id="2242"/>
    <lineage>
        <taxon>Archaea</taxon>
        <taxon>Methanobacteriati</taxon>
        <taxon>Methanobacteriota</taxon>
        <taxon>Stenosarchaea group</taxon>
        <taxon>Halobacteria</taxon>
        <taxon>Halobacteriales</taxon>
        <taxon>Halobacteriaceae</taxon>
        <taxon>Halobacterium</taxon>
    </lineage>
</organism>
<evidence type="ECO:0000255" key="1"/>
<evidence type="ECO:0000269" key="2">
    <source>
    </source>
</evidence>
<evidence type="ECO:0000269" key="3">
    <source>
    </source>
</evidence>
<evidence type="ECO:0000305" key="4"/>
<protein>
    <recommendedName>
        <fullName>Smc-like protein Sph1</fullName>
    </recommendedName>
</protein>
<name>SPH1_HALSI</name>
<sequence length="629" mass="70913">MWNVDVTCIGGIRSGEATLRPGPNIVQASNFQGKSSFLAAIQTAIGTTGLLTEDHPLMENEDDGKVTLETDEETYTVSLTRATDSDEPAISRSGTPYLTRDQDQIAARLFAVLGEDNPIRAAVREENQERLTELLKKPLETENIDLRIEPLQREIKELEDEVAAAEAASADLPAAQQKVTRLQGELRDLNETRDELERKVDEETDQRALRDELTAKQSDLEREEARLERLENQVDRRKAQLDDKEAALESLDIPDSPTAEADIAEKQTRIDELAVKIDLLDDLHRSTKAIIDEGEIDLITDVERTLSGDTFSCFVCGAETTAEAVTERLNEISDRQESLREQRATLTEEVTQMQQRTREIESKRQQKAELEDEIKRLRVDIQEDQHEVRSIEATIEELQAEIEQREAEYEAAEKAGESHSAELKTIQQKIGSTETKLDRAQAELERIEAELQKRNDRQEQLETKRDELETLRQRRKQKYNELVNQFDAAMADIIGRFAPGFDGAYLDQKTDANDTVGFEINLARDGHTTDLDTLSEGERELVGIVTALAGYRTFSVGDRVPCILLDGIGQLAAEHIRHMIEYLENTAEILVTTAYPEAGSFDGETVSPEHWDVISHETAQSRDHPQITN</sequence>
<comment type="function">
    <text evidence="2">May play a role in a late step of replication.</text>
</comment>
<comment type="subcellular location">
    <subcellularLocation>
        <location evidence="3">Cytoplasm</location>
    </subcellularLocation>
</comment>
<comment type="developmental stage">
    <text evidence="2">Protein level is high around the time of septum formation, but a basal protein level is present throughout the whole cell cycle.</text>
</comment>
<comment type="induction">
    <text evidence="2">Transcription is regulated in a cell cycle-dependent manner, with maximal expression around the time of septum formation.</text>
</comment>
<comment type="miscellaneous">
    <text>Overexpression results in modifications of cell morphology from rods to extended rods.</text>
</comment>
<comment type="similarity">
    <text evidence="4">Belongs to the Sph1/Sph2 family.</text>
</comment>
<accession>O07116</accession>
<proteinExistence type="evidence at transcript level"/>
<keyword id="KW-0175">Coiled coil</keyword>
<keyword id="KW-0963">Cytoplasm</keyword>
<dbReference type="EMBL" id="Y13615">
    <property type="protein sequence ID" value="CAA73936.1"/>
    <property type="molecule type" value="Genomic_DNA"/>
</dbReference>
<dbReference type="PIR" id="T44607">
    <property type="entry name" value="T44607"/>
</dbReference>
<dbReference type="SMR" id="O07116"/>
<dbReference type="GO" id="GO:0005737">
    <property type="term" value="C:cytoplasm"/>
    <property type="evidence" value="ECO:0007669"/>
    <property type="project" value="UniProtKB-SubCell"/>
</dbReference>
<dbReference type="Gene3D" id="3.40.50.300">
    <property type="entry name" value="P-loop containing nucleotide triphosphate hydrolases"/>
    <property type="match status" value="2"/>
</dbReference>
<dbReference type="InterPro" id="IPR027417">
    <property type="entry name" value="P-loop_NTPase"/>
</dbReference>
<dbReference type="NCBIfam" id="NF045487">
    <property type="entry name" value="ASRP"/>
    <property type="match status" value="1"/>
</dbReference>
<dbReference type="PANTHER" id="PTHR32114">
    <property type="entry name" value="ABC TRANSPORTER ABCH.3"/>
    <property type="match status" value="1"/>
</dbReference>
<dbReference type="PANTHER" id="PTHR32114:SF2">
    <property type="entry name" value="ABC TRANSPORTER ABCH.3"/>
    <property type="match status" value="1"/>
</dbReference>
<dbReference type="SUPFAM" id="SSF52540">
    <property type="entry name" value="P-loop containing nucleoside triphosphate hydrolases"/>
    <property type="match status" value="1"/>
</dbReference>
<dbReference type="SUPFAM" id="SSF57997">
    <property type="entry name" value="Tropomyosin"/>
    <property type="match status" value="1"/>
</dbReference>
<gene>
    <name type="primary">sph1</name>
    <name type="synonym">hp71</name>
</gene>
<feature type="chain" id="PRO_0000409224" description="Smc-like protein Sph1">
    <location>
        <begin position="1"/>
        <end position="629"/>
    </location>
</feature>
<feature type="coiled-coil region" evidence="1">
    <location>
        <begin position="139"/>
        <end position="282"/>
    </location>
</feature>
<feature type="coiled-coil region" evidence="1">
    <location>
        <begin position="318"/>
        <end position="487"/>
    </location>
</feature>
<reference key="1">
    <citation type="journal article" date="1998" name="Arch. Microbiol.">
        <title>A 71-kDa protein from Halobacterium salinarium belongs to a ubiquitous P-loop ATPase superfamily.</title>
        <authorList>
            <person name="Ruepp A."/>
            <person name="Wanner G."/>
            <person name="Soppa J."/>
        </authorList>
    </citation>
    <scope>NUCLEOTIDE SEQUENCE [GENOMIC DNA]</scope>
    <scope>SUBCELLULAR LOCATION</scope>
    <scope>OVEREXPRESSION</scope>
    <source>
        <strain>DSM 670</strain>
    </source>
</reference>
<reference key="2">
    <citation type="journal article" date="2002" name="Mol. Microbiol.">
        <title>Cell cycle-dependent expression of an essential SMC-like protein and dynamic chromosome localization in the archaeon Halobacterium salinarum.</title>
        <authorList>
            <person name="Herrmann U."/>
            <person name="Soppa J."/>
        </authorList>
    </citation>
    <scope>FUNCTION</scope>
    <scope>DEVELOPMENTAL STAGE</scope>
    <scope>INDUCTION</scope>
    <source>
        <strain>DSM 670</strain>
    </source>
</reference>